<protein>
    <recommendedName>
        <fullName>Conserved virulence factor B</fullName>
    </recommendedName>
</protein>
<organism>
    <name type="scientific">Staphylococcus aureus (strain COL)</name>
    <dbReference type="NCBI Taxonomy" id="93062"/>
    <lineage>
        <taxon>Bacteria</taxon>
        <taxon>Bacillati</taxon>
        <taxon>Bacillota</taxon>
        <taxon>Bacilli</taxon>
        <taxon>Bacillales</taxon>
        <taxon>Staphylococcaceae</taxon>
        <taxon>Staphylococcus</taxon>
    </lineage>
</organism>
<proteinExistence type="inferred from homology"/>
<evidence type="ECO:0000250" key="1"/>
<evidence type="ECO:0000305" key="2"/>
<dbReference type="EMBL" id="CP000046">
    <property type="protein sequence ID" value="AAW38171.1"/>
    <property type="molecule type" value="Genomic_DNA"/>
</dbReference>
<dbReference type="RefSeq" id="WP_001162359.1">
    <property type="nucleotide sequence ID" value="NZ_JBGOFO010000003.1"/>
</dbReference>
<dbReference type="SMR" id="Q5HG29"/>
<dbReference type="KEGG" id="sac:SACOL1426"/>
<dbReference type="HOGENOM" id="CLU_064885_0_0_9"/>
<dbReference type="Proteomes" id="UP000000530">
    <property type="component" value="Chromosome"/>
</dbReference>
<dbReference type="Gene3D" id="2.40.50.140">
    <property type="entry name" value="Nucleic acid-binding proteins"/>
    <property type="match status" value="2"/>
</dbReference>
<dbReference type="Gene3D" id="1.10.10.10">
    <property type="entry name" value="Winged helix-like DNA-binding domain superfamily/Winged helix DNA-binding domain"/>
    <property type="match status" value="1"/>
</dbReference>
<dbReference type="InterPro" id="IPR014464">
    <property type="entry name" value="CvfB_fam"/>
</dbReference>
<dbReference type="InterPro" id="IPR048588">
    <property type="entry name" value="CvfB_S1_2nd"/>
</dbReference>
<dbReference type="InterPro" id="IPR048587">
    <property type="entry name" value="CvfB_S1_3rd"/>
</dbReference>
<dbReference type="InterPro" id="IPR039566">
    <property type="entry name" value="CvfB_S1_st"/>
</dbReference>
<dbReference type="InterPro" id="IPR040764">
    <property type="entry name" value="CvfB_WH"/>
</dbReference>
<dbReference type="InterPro" id="IPR012340">
    <property type="entry name" value="NA-bd_OB-fold"/>
</dbReference>
<dbReference type="InterPro" id="IPR036388">
    <property type="entry name" value="WH-like_DNA-bd_sf"/>
</dbReference>
<dbReference type="PANTHER" id="PTHR37296">
    <property type="entry name" value="CONSERVED VIRULENCE FACTOR B"/>
    <property type="match status" value="1"/>
</dbReference>
<dbReference type="PANTHER" id="PTHR37296:SF1">
    <property type="entry name" value="CONSERVED VIRULENCE FACTOR B"/>
    <property type="match status" value="1"/>
</dbReference>
<dbReference type="Pfam" id="PF21191">
    <property type="entry name" value="CvfB_1st"/>
    <property type="match status" value="1"/>
</dbReference>
<dbReference type="Pfam" id="PF21543">
    <property type="entry name" value="CvfB_2nd"/>
    <property type="match status" value="1"/>
</dbReference>
<dbReference type="Pfam" id="PF17783">
    <property type="entry name" value="CvfB_WH"/>
    <property type="match status" value="1"/>
</dbReference>
<dbReference type="Pfam" id="PF13509">
    <property type="entry name" value="S1_2"/>
    <property type="match status" value="1"/>
</dbReference>
<dbReference type="PIRSF" id="PIRSF012524">
    <property type="entry name" value="YitL_S1"/>
    <property type="match status" value="1"/>
</dbReference>
<keyword id="KW-0843">Virulence</keyword>
<accession>Q5HG29</accession>
<feature type="chain" id="PRO_0000282290" description="Conserved virulence factor B">
    <location>
        <begin position="1"/>
        <end position="300"/>
    </location>
</feature>
<name>CVFB_STAAC</name>
<gene>
    <name type="primary">cvfB</name>
    <name type="ordered locus">SACOL1426</name>
</gene>
<sequence>MALDKDIVGSIEFLEVVGLQGSTYLLKGPNGENVKLNQSEMNDDDELEVGEEYSFFIYPNRSGELFATQNMPDITKDKYDFAKVLKTDRDGARIDVGLPREVLVPWEDLPKVKSLWPQPGDYLLVTLRIDRENHMYGRLASESVVENMFTPVHDDNLKNEVIEAKPYRVLRIGSFLLSESGYKIFVHESERKAEPRLGESVQVRIIGHNDKGELNGSFLPLAHERLDDDGQVIFDLLVEYDGELPFWDKSSPEAIKEVFNMSKGSFKRAIGHLYKQKIINIETGKIALTKKGWSRMDSKE</sequence>
<reference key="1">
    <citation type="journal article" date="2005" name="J. Bacteriol.">
        <title>Insights on evolution of virulence and resistance from the complete genome analysis of an early methicillin-resistant Staphylococcus aureus strain and a biofilm-producing methicillin-resistant Staphylococcus epidermidis strain.</title>
        <authorList>
            <person name="Gill S.R."/>
            <person name="Fouts D.E."/>
            <person name="Archer G.L."/>
            <person name="Mongodin E.F."/>
            <person name="DeBoy R.T."/>
            <person name="Ravel J."/>
            <person name="Paulsen I.T."/>
            <person name="Kolonay J.F."/>
            <person name="Brinkac L.M."/>
            <person name="Beanan M.J."/>
            <person name="Dodson R.J."/>
            <person name="Daugherty S.C."/>
            <person name="Madupu R."/>
            <person name="Angiuoli S.V."/>
            <person name="Durkin A.S."/>
            <person name="Haft D.H."/>
            <person name="Vamathevan J.J."/>
            <person name="Khouri H."/>
            <person name="Utterback T.R."/>
            <person name="Lee C."/>
            <person name="Dimitrov G."/>
            <person name="Jiang L."/>
            <person name="Qin H."/>
            <person name="Weidman J."/>
            <person name="Tran K."/>
            <person name="Kang K.H."/>
            <person name="Hance I.R."/>
            <person name="Nelson K.E."/>
            <person name="Fraser C.M."/>
        </authorList>
    </citation>
    <scope>NUCLEOTIDE SEQUENCE [LARGE SCALE GENOMIC DNA]</scope>
    <source>
        <strain>COL</strain>
    </source>
</reference>
<comment type="function">
    <text evidence="1">Contributes to the expression of virulence factors and to pathogenicity. Involved in the production of hemolysin, DNase, protease and protein A (By similarity).</text>
</comment>
<comment type="similarity">
    <text evidence="2">Belongs to the CvfB family.</text>
</comment>